<feature type="chain" id="PRO_1000213404" description="Glycerol-3-phosphate acyltransferase">
    <location>
        <begin position="1"/>
        <end position="189"/>
    </location>
</feature>
<feature type="transmembrane region" description="Helical" evidence="1">
    <location>
        <begin position="1"/>
        <end position="21"/>
    </location>
</feature>
<feature type="transmembrane region" description="Helical" evidence="1">
    <location>
        <begin position="79"/>
        <end position="99"/>
    </location>
</feature>
<feature type="transmembrane region" description="Helical" evidence="1">
    <location>
        <begin position="113"/>
        <end position="133"/>
    </location>
</feature>
<feature type="transmembrane region" description="Helical" evidence="1">
    <location>
        <begin position="151"/>
        <end position="171"/>
    </location>
</feature>
<evidence type="ECO:0000255" key="1">
    <source>
        <dbReference type="HAMAP-Rule" id="MF_01043"/>
    </source>
</evidence>
<accession>C1DIY2</accession>
<keyword id="KW-0997">Cell inner membrane</keyword>
<keyword id="KW-1003">Cell membrane</keyword>
<keyword id="KW-0444">Lipid biosynthesis</keyword>
<keyword id="KW-0443">Lipid metabolism</keyword>
<keyword id="KW-0472">Membrane</keyword>
<keyword id="KW-0594">Phospholipid biosynthesis</keyword>
<keyword id="KW-1208">Phospholipid metabolism</keyword>
<keyword id="KW-0808">Transferase</keyword>
<keyword id="KW-0812">Transmembrane</keyword>
<keyword id="KW-1133">Transmembrane helix</keyword>
<comment type="function">
    <text evidence="1">Catalyzes the transfer of an acyl group from acyl-phosphate (acyl-PO(4)) to glycerol-3-phosphate (G3P) to form lysophosphatidic acid (LPA). This enzyme utilizes acyl-phosphate as fatty acyl donor, but not acyl-CoA or acyl-ACP.</text>
</comment>
<comment type="catalytic activity">
    <reaction evidence="1">
        <text>an acyl phosphate + sn-glycerol 3-phosphate = a 1-acyl-sn-glycero-3-phosphate + phosphate</text>
        <dbReference type="Rhea" id="RHEA:34075"/>
        <dbReference type="ChEBI" id="CHEBI:43474"/>
        <dbReference type="ChEBI" id="CHEBI:57597"/>
        <dbReference type="ChEBI" id="CHEBI:57970"/>
        <dbReference type="ChEBI" id="CHEBI:59918"/>
        <dbReference type="EC" id="2.3.1.275"/>
    </reaction>
</comment>
<comment type="pathway">
    <text evidence="1">Lipid metabolism; phospholipid metabolism.</text>
</comment>
<comment type="subunit">
    <text evidence="1">Probably interacts with PlsX.</text>
</comment>
<comment type="subcellular location">
    <subcellularLocation>
        <location evidence="1">Cell inner membrane</location>
        <topology evidence="1">Multi-pass membrane protein</topology>
    </subcellularLocation>
</comment>
<comment type="similarity">
    <text evidence="1">Belongs to the PlsY family.</text>
</comment>
<dbReference type="EC" id="2.3.1.275" evidence="1"/>
<dbReference type="EMBL" id="CP001157">
    <property type="protein sequence ID" value="ACO80801.1"/>
    <property type="molecule type" value="Genomic_DNA"/>
</dbReference>
<dbReference type="RefSeq" id="WP_012703164.1">
    <property type="nucleotide sequence ID" value="NC_012560.1"/>
</dbReference>
<dbReference type="SMR" id="C1DIY2"/>
<dbReference type="STRING" id="322710.Avin_46960"/>
<dbReference type="EnsemblBacteria" id="ACO80801">
    <property type="protein sequence ID" value="ACO80801"/>
    <property type="gene ID" value="Avin_46960"/>
</dbReference>
<dbReference type="GeneID" id="88187571"/>
<dbReference type="KEGG" id="avn:Avin_46960"/>
<dbReference type="eggNOG" id="COG0344">
    <property type="taxonomic scope" value="Bacteria"/>
</dbReference>
<dbReference type="HOGENOM" id="CLU_081254_0_0_6"/>
<dbReference type="OrthoDB" id="9777124at2"/>
<dbReference type="UniPathway" id="UPA00085"/>
<dbReference type="Proteomes" id="UP000002424">
    <property type="component" value="Chromosome"/>
</dbReference>
<dbReference type="GO" id="GO:0005886">
    <property type="term" value="C:plasma membrane"/>
    <property type="evidence" value="ECO:0007669"/>
    <property type="project" value="UniProtKB-SubCell"/>
</dbReference>
<dbReference type="GO" id="GO:0043772">
    <property type="term" value="F:acyl-phosphate glycerol-3-phosphate acyltransferase activity"/>
    <property type="evidence" value="ECO:0007669"/>
    <property type="project" value="UniProtKB-UniRule"/>
</dbReference>
<dbReference type="GO" id="GO:0008654">
    <property type="term" value="P:phospholipid biosynthetic process"/>
    <property type="evidence" value="ECO:0007669"/>
    <property type="project" value="UniProtKB-UniRule"/>
</dbReference>
<dbReference type="HAMAP" id="MF_01043">
    <property type="entry name" value="PlsY"/>
    <property type="match status" value="1"/>
</dbReference>
<dbReference type="InterPro" id="IPR003811">
    <property type="entry name" value="G3P_acylTferase_PlsY"/>
</dbReference>
<dbReference type="NCBIfam" id="TIGR00023">
    <property type="entry name" value="glycerol-3-phosphate 1-O-acyltransferase PlsY"/>
    <property type="match status" value="1"/>
</dbReference>
<dbReference type="PANTHER" id="PTHR30309:SF0">
    <property type="entry name" value="GLYCEROL-3-PHOSPHATE ACYLTRANSFERASE-RELATED"/>
    <property type="match status" value="1"/>
</dbReference>
<dbReference type="PANTHER" id="PTHR30309">
    <property type="entry name" value="INNER MEMBRANE PROTEIN YGIH"/>
    <property type="match status" value="1"/>
</dbReference>
<dbReference type="Pfam" id="PF02660">
    <property type="entry name" value="G3P_acyltransf"/>
    <property type="match status" value="1"/>
</dbReference>
<dbReference type="SMART" id="SM01207">
    <property type="entry name" value="G3P_acyltransf"/>
    <property type="match status" value="1"/>
</dbReference>
<protein>
    <recommendedName>
        <fullName evidence="1">Glycerol-3-phosphate acyltransferase</fullName>
    </recommendedName>
    <alternativeName>
        <fullName evidence="1">Acyl-PO4 G3P acyltransferase</fullName>
    </alternativeName>
    <alternativeName>
        <fullName evidence="1">Acyl-phosphate--glycerol-3-phosphate acyltransferase</fullName>
    </alternativeName>
    <alternativeName>
        <fullName evidence="1">G3P acyltransferase</fullName>
        <shortName evidence="1">GPAT</shortName>
        <ecNumber evidence="1">2.3.1.275</ecNumber>
    </alternativeName>
    <alternativeName>
        <fullName evidence="1">Lysophosphatidic acid synthase</fullName>
        <shortName evidence="1">LPA synthase</shortName>
    </alternativeName>
</protein>
<organism>
    <name type="scientific">Azotobacter vinelandii (strain DJ / ATCC BAA-1303)</name>
    <dbReference type="NCBI Taxonomy" id="322710"/>
    <lineage>
        <taxon>Bacteria</taxon>
        <taxon>Pseudomonadati</taxon>
        <taxon>Pseudomonadota</taxon>
        <taxon>Gammaproteobacteria</taxon>
        <taxon>Pseudomonadales</taxon>
        <taxon>Pseudomonadaceae</taxon>
        <taxon>Azotobacter</taxon>
    </lineage>
</organism>
<proteinExistence type="inferred from homology"/>
<gene>
    <name evidence="1" type="primary">plsY</name>
    <name type="ordered locus">Avin_46960</name>
</gene>
<name>PLSY_AZOVD</name>
<reference key="1">
    <citation type="journal article" date="2009" name="J. Bacteriol.">
        <title>Genome sequence of Azotobacter vinelandii, an obligate aerobe specialized to support diverse anaerobic metabolic processes.</title>
        <authorList>
            <person name="Setubal J.C."/>
            <person name="Dos Santos P."/>
            <person name="Goldman B.S."/>
            <person name="Ertesvaag H."/>
            <person name="Espin G."/>
            <person name="Rubio L.M."/>
            <person name="Valla S."/>
            <person name="Almeida N.F."/>
            <person name="Balasubramanian D."/>
            <person name="Cromes L."/>
            <person name="Curatti L."/>
            <person name="Du Z."/>
            <person name="Godsy E."/>
            <person name="Goodner B."/>
            <person name="Hellner-Burris K."/>
            <person name="Hernandez J.A."/>
            <person name="Houmiel K."/>
            <person name="Imperial J."/>
            <person name="Kennedy C."/>
            <person name="Larson T.J."/>
            <person name="Latreille P."/>
            <person name="Ligon L.S."/>
            <person name="Lu J."/>
            <person name="Maerk M."/>
            <person name="Miller N.M."/>
            <person name="Norton S."/>
            <person name="O'Carroll I.P."/>
            <person name="Paulsen I."/>
            <person name="Raulfs E.C."/>
            <person name="Roemer R."/>
            <person name="Rosser J."/>
            <person name="Segura D."/>
            <person name="Slater S."/>
            <person name="Stricklin S.L."/>
            <person name="Studholme D.J."/>
            <person name="Sun J."/>
            <person name="Viana C.J."/>
            <person name="Wallin E."/>
            <person name="Wang B."/>
            <person name="Wheeler C."/>
            <person name="Zhu H."/>
            <person name="Dean D.R."/>
            <person name="Dixon R."/>
            <person name="Wood D."/>
        </authorList>
    </citation>
    <scope>NUCLEOTIDE SEQUENCE [LARGE SCALE GENOMIC DNA]</scope>
    <source>
        <strain>DJ / ATCC BAA-1303</strain>
    </source>
</reference>
<sequence>MVWLLAILAYLLGSLSFAILLSQLSGGPDPRACGSGNPGTTNMLRIAGKRLAALTLLGDLGKGLLPVLIAQHAGLGVQQQAWIGLAAVSGHLYPLYFNFRGGKGVATAAGMLLGLYPPAVLPAVAAWLLVFAFTRTSSLAALAATPLCLPLLAWRQPEALLPMLLLYGVIVWRHRGNLHALFAGRERHF</sequence>